<name>RS16_BREBN</name>
<comment type="similarity">
    <text evidence="1">Belongs to the bacterial ribosomal protein bS16 family.</text>
</comment>
<proteinExistence type="inferred from homology"/>
<organism>
    <name type="scientific">Brevibacillus brevis (strain 47 / JCM 6285 / NBRC 100599)</name>
    <dbReference type="NCBI Taxonomy" id="358681"/>
    <lineage>
        <taxon>Bacteria</taxon>
        <taxon>Bacillati</taxon>
        <taxon>Bacillota</taxon>
        <taxon>Bacilli</taxon>
        <taxon>Bacillales</taxon>
        <taxon>Paenibacillaceae</taxon>
        <taxon>Brevibacillus</taxon>
    </lineage>
</organism>
<feature type="chain" id="PRO_1000196347" description="Small ribosomal subunit protein bS16">
    <location>
        <begin position="1"/>
        <end position="90"/>
    </location>
</feature>
<accession>C0ZFN5</accession>
<dbReference type="EMBL" id="AP008955">
    <property type="protein sequence ID" value="BAH44594.1"/>
    <property type="molecule type" value="Genomic_DNA"/>
</dbReference>
<dbReference type="RefSeq" id="WP_007719713.1">
    <property type="nucleotide sequence ID" value="NC_012491.1"/>
</dbReference>
<dbReference type="SMR" id="C0ZFN5"/>
<dbReference type="STRING" id="358681.BBR47_36170"/>
<dbReference type="GeneID" id="95749694"/>
<dbReference type="KEGG" id="bbe:BBR47_36170"/>
<dbReference type="eggNOG" id="COG0228">
    <property type="taxonomic scope" value="Bacteria"/>
</dbReference>
<dbReference type="HOGENOM" id="CLU_100590_5_0_9"/>
<dbReference type="Proteomes" id="UP000001877">
    <property type="component" value="Chromosome"/>
</dbReference>
<dbReference type="GO" id="GO:0005737">
    <property type="term" value="C:cytoplasm"/>
    <property type="evidence" value="ECO:0007669"/>
    <property type="project" value="UniProtKB-ARBA"/>
</dbReference>
<dbReference type="GO" id="GO:0015935">
    <property type="term" value="C:small ribosomal subunit"/>
    <property type="evidence" value="ECO:0007669"/>
    <property type="project" value="TreeGrafter"/>
</dbReference>
<dbReference type="GO" id="GO:0003735">
    <property type="term" value="F:structural constituent of ribosome"/>
    <property type="evidence" value="ECO:0007669"/>
    <property type="project" value="InterPro"/>
</dbReference>
<dbReference type="GO" id="GO:0006412">
    <property type="term" value="P:translation"/>
    <property type="evidence" value="ECO:0007669"/>
    <property type="project" value="UniProtKB-UniRule"/>
</dbReference>
<dbReference type="FunFam" id="3.30.1320.10:FF:000002">
    <property type="entry name" value="30S ribosomal protein S16"/>
    <property type="match status" value="1"/>
</dbReference>
<dbReference type="Gene3D" id="3.30.1320.10">
    <property type="match status" value="1"/>
</dbReference>
<dbReference type="HAMAP" id="MF_00385">
    <property type="entry name" value="Ribosomal_bS16"/>
    <property type="match status" value="1"/>
</dbReference>
<dbReference type="InterPro" id="IPR000307">
    <property type="entry name" value="Ribosomal_bS16"/>
</dbReference>
<dbReference type="InterPro" id="IPR023803">
    <property type="entry name" value="Ribosomal_bS16_dom_sf"/>
</dbReference>
<dbReference type="NCBIfam" id="TIGR00002">
    <property type="entry name" value="S16"/>
    <property type="match status" value="1"/>
</dbReference>
<dbReference type="PANTHER" id="PTHR12919">
    <property type="entry name" value="30S RIBOSOMAL PROTEIN S16"/>
    <property type="match status" value="1"/>
</dbReference>
<dbReference type="PANTHER" id="PTHR12919:SF20">
    <property type="entry name" value="SMALL RIBOSOMAL SUBUNIT PROTEIN BS16M"/>
    <property type="match status" value="1"/>
</dbReference>
<dbReference type="Pfam" id="PF00886">
    <property type="entry name" value="Ribosomal_S16"/>
    <property type="match status" value="1"/>
</dbReference>
<dbReference type="SUPFAM" id="SSF54565">
    <property type="entry name" value="Ribosomal protein S16"/>
    <property type="match status" value="1"/>
</dbReference>
<reference key="1">
    <citation type="submission" date="2005-03" db="EMBL/GenBank/DDBJ databases">
        <title>Brevibacillus brevis strain 47, complete genome.</title>
        <authorList>
            <person name="Hosoyama A."/>
            <person name="Yamada R."/>
            <person name="Hongo Y."/>
            <person name="Terui Y."/>
            <person name="Ankai A."/>
            <person name="Masuyama W."/>
            <person name="Sekiguchi M."/>
            <person name="Takeda T."/>
            <person name="Asano K."/>
            <person name="Ohji S."/>
            <person name="Ichikawa N."/>
            <person name="Narita S."/>
            <person name="Aoki N."/>
            <person name="Miura H."/>
            <person name="Matsushita S."/>
            <person name="Sekigawa T."/>
            <person name="Yamagata H."/>
            <person name="Yoshikawa H."/>
            <person name="Udaka S."/>
            <person name="Tanikawa S."/>
            <person name="Fujita N."/>
        </authorList>
    </citation>
    <scope>NUCLEOTIDE SEQUENCE [LARGE SCALE GENOMIC DNA]</scope>
    <source>
        <strain>47 / JCM 6285 / NBRC 100599</strain>
    </source>
</reference>
<sequence>MAVKIRLKRMGSKKAPFYRVVVADSRSPRDGRFIEEIGYYNPVAQPAVVKIDTDKAVQWILNGAAPTDTVRNLLSKEGVMAKVHETKYGK</sequence>
<keyword id="KW-1185">Reference proteome</keyword>
<keyword id="KW-0687">Ribonucleoprotein</keyword>
<keyword id="KW-0689">Ribosomal protein</keyword>
<gene>
    <name evidence="1" type="primary">rpsP</name>
    <name type="ordered locus">BBR47_36170</name>
</gene>
<protein>
    <recommendedName>
        <fullName evidence="1">Small ribosomal subunit protein bS16</fullName>
    </recommendedName>
    <alternativeName>
        <fullName evidence="2">30S ribosomal protein S16</fullName>
    </alternativeName>
</protein>
<evidence type="ECO:0000255" key="1">
    <source>
        <dbReference type="HAMAP-Rule" id="MF_00385"/>
    </source>
</evidence>
<evidence type="ECO:0000305" key="2"/>